<name>RL1_HISS2</name>
<dbReference type="EMBL" id="CP000947">
    <property type="protein sequence ID" value="ACA32007.1"/>
    <property type="molecule type" value="Genomic_DNA"/>
</dbReference>
<dbReference type="RefSeq" id="WP_012341226.1">
    <property type="nucleotide sequence ID" value="NC_010519.1"/>
</dbReference>
<dbReference type="SMR" id="B0UUZ5"/>
<dbReference type="STRING" id="228400.HSM_0037"/>
<dbReference type="GeneID" id="31486312"/>
<dbReference type="KEGG" id="hsm:HSM_0037"/>
<dbReference type="HOGENOM" id="CLU_062853_0_0_6"/>
<dbReference type="GO" id="GO:0022625">
    <property type="term" value="C:cytosolic large ribosomal subunit"/>
    <property type="evidence" value="ECO:0007669"/>
    <property type="project" value="TreeGrafter"/>
</dbReference>
<dbReference type="GO" id="GO:0019843">
    <property type="term" value="F:rRNA binding"/>
    <property type="evidence" value="ECO:0007669"/>
    <property type="project" value="UniProtKB-UniRule"/>
</dbReference>
<dbReference type="GO" id="GO:0003735">
    <property type="term" value="F:structural constituent of ribosome"/>
    <property type="evidence" value="ECO:0007669"/>
    <property type="project" value="InterPro"/>
</dbReference>
<dbReference type="GO" id="GO:0000049">
    <property type="term" value="F:tRNA binding"/>
    <property type="evidence" value="ECO:0007669"/>
    <property type="project" value="UniProtKB-KW"/>
</dbReference>
<dbReference type="GO" id="GO:0006417">
    <property type="term" value="P:regulation of translation"/>
    <property type="evidence" value="ECO:0007669"/>
    <property type="project" value="UniProtKB-KW"/>
</dbReference>
<dbReference type="GO" id="GO:0006412">
    <property type="term" value="P:translation"/>
    <property type="evidence" value="ECO:0007669"/>
    <property type="project" value="UniProtKB-UniRule"/>
</dbReference>
<dbReference type="CDD" id="cd00403">
    <property type="entry name" value="Ribosomal_L1"/>
    <property type="match status" value="1"/>
</dbReference>
<dbReference type="FunFam" id="3.40.50.790:FF:000001">
    <property type="entry name" value="50S ribosomal protein L1"/>
    <property type="match status" value="1"/>
</dbReference>
<dbReference type="Gene3D" id="3.30.190.20">
    <property type="match status" value="1"/>
</dbReference>
<dbReference type="Gene3D" id="3.40.50.790">
    <property type="match status" value="1"/>
</dbReference>
<dbReference type="HAMAP" id="MF_01318_B">
    <property type="entry name" value="Ribosomal_uL1_B"/>
    <property type="match status" value="1"/>
</dbReference>
<dbReference type="InterPro" id="IPR005878">
    <property type="entry name" value="Ribosom_uL1_bac-type"/>
</dbReference>
<dbReference type="InterPro" id="IPR002143">
    <property type="entry name" value="Ribosomal_uL1"/>
</dbReference>
<dbReference type="InterPro" id="IPR023674">
    <property type="entry name" value="Ribosomal_uL1-like"/>
</dbReference>
<dbReference type="InterPro" id="IPR028364">
    <property type="entry name" value="Ribosomal_uL1/biogenesis"/>
</dbReference>
<dbReference type="InterPro" id="IPR016095">
    <property type="entry name" value="Ribosomal_uL1_3-a/b-sand"/>
</dbReference>
<dbReference type="InterPro" id="IPR023673">
    <property type="entry name" value="Ribosomal_uL1_CS"/>
</dbReference>
<dbReference type="NCBIfam" id="TIGR01169">
    <property type="entry name" value="rplA_bact"/>
    <property type="match status" value="1"/>
</dbReference>
<dbReference type="PANTHER" id="PTHR36427">
    <property type="entry name" value="54S RIBOSOMAL PROTEIN L1, MITOCHONDRIAL"/>
    <property type="match status" value="1"/>
</dbReference>
<dbReference type="PANTHER" id="PTHR36427:SF3">
    <property type="entry name" value="LARGE RIBOSOMAL SUBUNIT PROTEIN UL1M"/>
    <property type="match status" value="1"/>
</dbReference>
<dbReference type="Pfam" id="PF00687">
    <property type="entry name" value="Ribosomal_L1"/>
    <property type="match status" value="1"/>
</dbReference>
<dbReference type="PIRSF" id="PIRSF002155">
    <property type="entry name" value="Ribosomal_L1"/>
    <property type="match status" value="1"/>
</dbReference>
<dbReference type="SUPFAM" id="SSF56808">
    <property type="entry name" value="Ribosomal protein L1"/>
    <property type="match status" value="1"/>
</dbReference>
<dbReference type="PROSITE" id="PS01199">
    <property type="entry name" value="RIBOSOMAL_L1"/>
    <property type="match status" value="1"/>
</dbReference>
<evidence type="ECO:0000255" key="1">
    <source>
        <dbReference type="HAMAP-Rule" id="MF_01318"/>
    </source>
</evidence>
<evidence type="ECO:0000305" key="2"/>
<gene>
    <name evidence="1" type="primary">rplA</name>
    <name type="ordered locus">HSM_0037</name>
</gene>
<comment type="function">
    <text evidence="1">Binds directly to 23S rRNA. The L1 stalk is quite mobile in the ribosome, and is involved in E site tRNA release.</text>
</comment>
<comment type="function">
    <text evidence="1">Protein L1 is also a translational repressor protein, it controls the translation of the L11 operon by binding to its mRNA.</text>
</comment>
<comment type="subunit">
    <text evidence="1">Part of the 50S ribosomal subunit.</text>
</comment>
<comment type="similarity">
    <text evidence="1">Belongs to the universal ribosomal protein uL1 family.</text>
</comment>
<proteinExistence type="inferred from homology"/>
<keyword id="KW-0678">Repressor</keyword>
<keyword id="KW-0687">Ribonucleoprotein</keyword>
<keyword id="KW-0689">Ribosomal protein</keyword>
<keyword id="KW-0694">RNA-binding</keyword>
<keyword id="KW-0699">rRNA-binding</keyword>
<keyword id="KW-0810">Translation regulation</keyword>
<keyword id="KW-0820">tRNA-binding</keyword>
<feature type="chain" id="PRO_1000086289" description="Large ribosomal subunit protein uL1">
    <location>
        <begin position="1"/>
        <end position="229"/>
    </location>
</feature>
<accession>B0UUZ5</accession>
<sequence>MAKLTKRMKAIKAGVDSTKQYEINEAITVLKQFTSTKFVESVDVAVNLGIDARKSDQNVRGATVLPHGTGRSVRVAVFTQGANVDSAKAAGADLVGMEDLAEQIKKGEMNFDVVIASPDAMRVVGQLGQILGPRGLMPNPKVGTVTPNVAEAVKNAKSGQIRYRNDKNGIIHTTIGKANFSAEQLKENLQALLAALTKAKPATAKGIFIRKVSVSTTQGAGVAVDQSSL</sequence>
<organism>
    <name type="scientific">Histophilus somni (strain 2336)</name>
    <name type="common">Haemophilus somnus</name>
    <dbReference type="NCBI Taxonomy" id="228400"/>
    <lineage>
        <taxon>Bacteria</taxon>
        <taxon>Pseudomonadati</taxon>
        <taxon>Pseudomonadota</taxon>
        <taxon>Gammaproteobacteria</taxon>
        <taxon>Pasteurellales</taxon>
        <taxon>Pasteurellaceae</taxon>
        <taxon>Histophilus</taxon>
    </lineage>
</organism>
<reference key="1">
    <citation type="submission" date="2008-02" db="EMBL/GenBank/DDBJ databases">
        <title>Complete sequence of Haemophilus somnus 2336.</title>
        <authorList>
            <consortium name="US DOE Joint Genome Institute"/>
            <person name="Siddaramappa S."/>
            <person name="Duncan A.J."/>
            <person name="Challacombe J.F."/>
            <person name="Rainey D."/>
            <person name="Gillaspy A.F."/>
            <person name="Carson M."/>
            <person name="Gipson J."/>
            <person name="Gipson M."/>
            <person name="Bruce D."/>
            <person name="Detter J.C."/>
            <person name="Han C.S."/>
            <person name="Land M."/>
            <person name="Tapia R."/>
            <person name="Thompson L.S."/>
            <person name="Orvis J."/>
            <person name="Zaitshik J."/>
            <person name="Barnes G."/>
            <person name="Brettin T.S."/>
            <person name="Dyer D.W."/>
            <person name="Inzana T.J."/>
        </authorList>
    </citation>
    <scope>NUCLEOTIDE SEQUENCE [LARGE SCALE GENOMIC DNA]</scope>
    <source>
        <strain>2336</strain>
    </source>
</reference>
<protein>
    <recommendedName>
        <fullName evidence="1">Large ribosomal subunit protein uL1</fullName>
    </recommendedName>
    <alternativeName>
        <fullName evidence="2">50S ribosomal protein L1</fullName>
    </alternativeName>
</protein>